<accession>A5UKU9</accession>
<name>RL1_METS3</name>
<organism>
    <name type="scientific">Methanobrevibacter smithii (strain ATCC 35061 / DSM 861 / OCM 144 / PS)</name>
    <dbReference type="NCBI Taxonomy" id="420247"/>
    <lineage>
        <taxon>Archaea</taxon>
        <taxon>Methanobacteriati</taxon>
        <taxon>Methanobacteriota</taxon>
        <taxon>Methanomada group</taxon>
        <taxon>Methanobacteria</taxon>
        <taxon>Methanobacteriales</taxon>
        <taxon>Methanobacteriaceae</taxon>
        <taxon>Methanobrevibacter</taxon>
    </lineage>
</organism>
<proteinExistence type="inferred from homology"/>
<keyword id="KW-0678">Repressor</keyword>
<keyword id="KW-0687">Ribonucleoprotein</keyword>
<keyword id="KW-0689">Ribosomal protein</keyword>
<keyword id="KW-0694">RNA-binding</keyword>
<keyword id="KW-0699">rRNA-binding</keyword>
<keyword id="KW-0810">Translation regulation</keyword>
<keyword id="KW-0820">tRNA-binding</keyword>
<gene>
    <name evidence="1" type="primary">rpl1</name>
    <name type="ordered locus">Msm_0622</name>
</gene>
<evidence type="ECO:0000255" key="1">
    <source>
        <dbReference type="HAMAP-Rule" id="MF_01318"/>
    </source>
</evidence>
<evidence type="ECO:0000305" key="2"/>
<dbReference type="EMBL" id="CP000678">
    <property type="protein sequence ID" value="ABQ86827.1"/>
    <property type="status" value="ALT_INIT"/>
    <property type="molecule type" value="Genomic_DNA"/>
</dbReference>
<dbReference type="SMR" id="A5UKU9"/>
<dbReference type="STRING" id="420247.Msm_0622"/>
<dbReference type="EnsemblBacteria" id="ABQ86827">
    <property type="protein sequence ID" value="ABQ86827"/>
    <property type="gene ID" value="Msm_0622"/>
</dbReference>
<dbReference type="KEGG" id="msi:Msm_0622"/>
<dbReference type="PATRIC" id="fig|420247.28.peg.619"/>
<dbReference type="eggNOG" id="arCOG04289">
    <property type="taxonomic scope" value="Archaea"/>
</dbReference>
<dbReference type="HOGENOM" id="CLU_062853_4_0_2"/>
<dbReference type="Proteomes" id="UP000001992">
    <property type="component" value="Chromosome"/>
</dbReference>
<dbReference type="GO" id="GO:0015934">
    <property type="term" value="C:large ribosomal subunit"/>
    <property type="evidence" value="ECO:0007669"/>
    <property type="project" value="InterPro"/>
</dbReference>
<dbReference type="GO" id="GO:0019843">
    <property type="term" value="F:rRNA binding"/>
    <property type="evidence" value="ECO:0007669"/>
    <property type="project" value="UniProtKB-UniRule"/>
</dbReference>
<dbReference type="GO" id="GO:0003735">
    <property type="term" value="F:structural constituent of ribosome"/>
    <property type="evidence" value="ECO:0007669"/>
    <property type="project" value="InterPro"/>
</dbReference>
<dbReference type="GO" id="GO:0000049">
    <property type="term" value="F:tRNA binding"/>
    <property type="evidence" value="ECO:0007669"/>
    <property type="project" value="UniProtKB-KW"/>
</dbReference>
<dbReference type="GO" id="GO:0006417">
    <property type="term" value="P:regulation of translation"/>
    <property type="evidence" value="ECO:0007669"/>
    <property type="project" value="UniProtKB-KW"/>
</dbReference>
<dbReference type="GO" id="GO:0006412">
    <property type="term" value="P:translation"/>
    <property type="evidence" value="ECO:0007669"/>
    <property type="project" value="UniProtKB-UniRule"/>
</dbReference>
<dbReference type="CDD" id="cd00403">
    <property type="entry name" value="Ribosomal_L1"/>
    <property type="match status" value="1"/>
</dbReference>
<dbReference type="FunFam" id="3.40.50.790:FF:000005">
    <property type="entry name" value="50S ribosomal protein L1"/>
    <property type="match status" value="1"/>
</dbReference>
<dbReference type="Gene3D" id="3.30.190.20">
    <property type="match status" value="1"/>
</dbReference>
<dbReference type="Gene3D" id="3.40.50.790">
    <property type="match status" value="1"/>
</dbReference>
<dbReference type="HAMAP" id="MF_01318_A">
    <property type="entry name" value="Ribosomal_uL1_A"/>
    <property type="match status" value="1"/>
</dbReference>
<dbReference type="InterPro" id="IPR002143">
    <property type="entry name" value="Ribosomal_uL1"/>
</dbReference>
<dbReference type="InterPro" id="IPR023674">
    <property type="entry name" value="Ribosomal_uL1-like"/>
</dbReference>
<dbReference type="InterPro" id="IPR028364">
    <property type="entry name" value="Ribosomal_uL1/biogenesis"/>
</dbReference>
<dbReference type="InterPro" id="IPR016095">
    <property type="entry name" value="Ribosomal_uL1_3-a/b-sand"/>
</dbReference>
<dbReference type="InterPro" id="IPR023669">
    <property type="entry name" value="Ribosomal_uL1_arc"/>
</dbReference>
<dbReference type="InterPro" id="IPR023673">
    <property type="entry name" value="Ribosomal_uL1_CS"/>
</dbReference>
<dbReference type="NCBIfam" id="NF003244">
    <property type="entry name" value="PRK04203.1"/>
    <property type="match status" value="1"/>
</dbReference>
<dbReference type="PANTHER" id="PTHR36427">
    <property type="entry name" value="54S RIBOSOMAL PROTEIN L1, MITOCHONDRIAL"/>
    <property type="match status" value="1"/>
</dbReference>
<dbReference type="PANTHER" id="PTHR36427:SF3">
    <property type="entry name" value="LARGE RIBOSOMAL SUBUNIT PROTEIN UL1M"/>
    <property type="match status" value="1"/>
</dbReference>
<dbReference type="Pfam" id="PF00687">
    <property type="entry name" value="Ribosomal_L1"/>
    <property type="match status" value="1"/>
</dbReference>
<dbReference type="PIRSF" id="PIRSF002155">
    <property type="entry name" value="Ribosomal_L1"/>
    <property type="match status" value="1"/>
</dbReference>
<dbReference type="SUPFAM" id="SSF56808">
    <property type="entry name" value="Ribosomal protein L1"/>
    <property type="match status" value="1"/>
</dbReference>
<dbReference type="PROSITE" id="PS01199">
    <property type="entry name" value="RIBOSOMAL_L1"/>
    <property type="match status" value="1"/>
</dbReference>
<protein>
    <recommendedName>
        <fullName evidence="1">Large ribosomal subunit protein uL1</fullName>
    </recommendedName>
    <alternativeName>
        <fullName evidence="2">50S ribosomal protein L1</fullName>
    </alternativeName>
</protein>
<comment type="function">
    <text evidence="1">Binds directly to 23S rRNA. Probably involved in E site tRNA release.</text>
</comment>
<comment type="function">
    <text evidence="1">Protein L1 is also a translational repressor protein, it controls the translation of its operon by binding to its mRNA.</text>
</comment>
<comment type="subunit">
    <text evidence="1">Part of the 50S ribosomal subunit.</text>
</comment>
<comment type="similarity">
    <text evidence="1">Belongs to the universal ribosomal protein uL1 family.</text>
</comment>
<comment type="sequence caution" evidence="2">
    <conflict type="erroneous initiation">
        <sequence resource="EMBL-CDS" id="ABQ86827"/>
    </conflict>
</comment>
<reference key="1">
    <citation type="journal article" date="2007" name="Proc. Natl. Acad. Sci. U.S.A.">
        <title>Genomic and metabolic adaptations of Methanobrevibacter smithii to the human gut.</title>
        <authorList>
            <person name="Samuel B.S."/>
            <person name="Hansen E.E."/>
            <person name="Manchester J.K."/>
            <person name="Coutinho P.M."/>
            <person name="Henrissat B."/>
            <person name="Fulton R."/>
            <person name="Latreille P."/>
            <person name="Kim K."/>
            <person name="Wilson R.K."/>
            <person name="Gordon J.I."/>
        </authorList>
    </citation>
    <scope>NUCLEOTIDE SEQUENCE [LARGE SCALE GENOMIC DNA]</scope>
    <source>
        <strain>ATCC 35061 / DSM 861 / OCM 144 / PS</strain>
    </source>
</reference>
<sequence length="212" mass="23416">MTQEVLEAVKEAKEQSKPRNFTQSVDMIVNIRDLDVKKPENRFNEEVTLPNGRGKEVKIGVIADGELIVQAKDAGVALVINKADLEELGKDRKAAKKAANSVDFFIAQADMMPLVGRFLGPILGPRNKMPKPVPASIKLDPLLERLQSTVKVGIKQQPAIQIIVGSQDMSDEDLAENIETVLTVLDRHLDKGRNQIKSMFIKTTMGPIVRVI</sequence>
<feature type="chain" id="PRO_0000307665" description="Large ribosomal subunit protein uL1">
    <location>
        <begin position="1"/>
        <end position="212"/>
    </location>
</feature>